<feature type="signal peptide" evidence="2">
    <location>
        <begin position="1"/>
        <end position="19"/>
    </location>
</feature>
<feature type="propeptide" id="PRO_0000388454" evidence="1">
    <location>
        <begin position="20"/>
        <end position="190"/>
    </location>
</feature>
<feature type="chain" id="PRO_0000388455" description="Probable neutral protease 2 homolog MCYG_00239">
    <location>
        <begin position="191"/>
        <end position="367"/>
    </location>
</feature>
<feature type="active site" evidence="3">
    <location>
        <position position="319"/>
    </location>
</feature>
<feature type="binding site" evidence="3">
    <location>
        <position position="318"/>
    </location>
    <ligand>
        <name>Zn(2+)</name>
        <dbReference type="ChEBI" id="CHEBI:29105"/>
        <note>catalytic</note>
    </ligand>
</feature>
<feature type="binding site" evidence="3">
    <location>
        <position position="322"/>
    </location>
    <ligand>
        <name>Zn(2+)</name>
        <dbReference type="ChEBI" id="CHEBI:29105"/>
        <note>catalytic</note>
    </ligand>
</feature>
<feature type="binding site" evidence="3">
    <location>
        <position position="333"/>
    </location>
    <ligand>
        <name>Zn(2+)</name>
        <dbReference type="ChEBI" id="CHEBI:29105"/>
        <note>catalytic</note>
    </ligand>
</feature>
<feature type="disulfide bond" evidence="1">
    <location>
        <begin position="198"/>
        <end position="268"/>
    </location>
</feature>
<feature type="disulfide bond" evidence="1">
    <location>
        <begin position="275"/>
        <end position="293"/>
    </location>
</feature>
<feature type="disulfide bond" evidence="1">
    <location>
        <begin position="307"/>
        <end position="367"/>
    </location>
</feature>
<comment type="function">
    <text evidence="1">Probable secreted metalloprotease that shows high activities on basic nuclear substrates such as histone and protamine (By similarity). May be involved in virulence.</text>
</comment>
<comment type="catalytic activity">
    <reaction>
        <text>Preferential cleavage of bonds with hydrophobic residues in P1'. Also 3-Asn-|-Gln-4 and 8-Gly-|-Ser-9 bonds in insulin B chain.</text>
        <dbReference type="EC" id="3.4.24.39"/>
    </reaction>
</comment>
<comment type="cofactor">
    <cofactor evidence="1">
        <name>Zn(2+)</name>
        <dbReference type="ChEBI" id="CHEBI:29105"/>
    </cofactor>
    <text evidence="1">Binds 1 zinc ion per subunit.</text>
</comment>
<comment type="subcellular location">
    <subcellularLocation>
        <location evidence="4">Secreted</location>
    </subcellularLocation>
</comment>
<comment type="similarity">
    <text evidence="4">Belongs to the peptidase M35 family.</text>
</comment>
<proteinExistence type="inferred from homology"/>
<organism>
    <name type="scientific">Arthroderma otae (strain ATCC MYA-4605 / CBS 113480)</name>
    <name type="common">Microsporum canis</name>
    <dbReference type="NCBI Taxonomy" id="554155"/>
    <lineage>
        <taxon>Eukaryota</taxon>
        <taxon>Fungi</taxon>
        <taxon>Dikarya</taxon>
        <taxon>Ascomycota</taxon>
        <taxon>Pezizomycotina</taxon>
        <taxon>Eurotiomycetes</taxon>
        <taxon>Eurotiomycetidae</taxon>
        <taxon>Onygenales</taxon>
        <taxon>Arthrodermataceae</taxon>
        <taxon>Microsporum</taxon>
    </lineage>
</organism>
<accession>C5FCA7</accession>
<gene>
    <name type="ORF">MCYG_00239</name>
</gene>
<dbReference type="EC" id="3.4.24.39"/>
<dbReference type="EMBL" id="DS995701">
    <property type="protein sequence ID" value="EEQ27351.1"/>
    <property type="molecule type" value="Genomic_DNA"/>
</dbReference>
<dbReference type="RefSeq" id="XP_002850135.1">
    <property type="nucleotide sequence ID" value="XM_002850089.1"/>
</dbReference>
<dbReference type="SMR" id="C5FCA7"/>
<dbReference type="STRING" id="554155.C5FCA7"/>
<dbReference type="MEROPS" id="M35.001"/>
<dbReference type="GeneID" id="9225115"/>
<dbReference type="VEuPathDB" id="FungiDB:MCYG_00239"/>
<dbReference type="eggNOG" id="ENOG502SGF5">
    <property type="taxonomic scope" value="Eukaryota"/>
</dbReference>
<dbReference type="HOGENOM" id="CLU_039313_1_0_1"/>
<dbReference type="OMA" id="QTMWDGN"/>
<dbReference type="OrthoDB" id="412874at2759"/>
<dbReference type="Proteomes" id="UP000002035">
    <property type="component" value="Unassembled WGS sequence"/>
</dbReference>
<dbReference type="GO" id="GO:0005576">
    <property type="term" value="C:extracellular region"/>
    <property type="evidence" value="ECO:0007669"/>
    <property type="project" value="UniProtKB-SubCell"/>
</dbReference>
<dbReference type="GO" id="GO:0046872">
    <property type="term" value="F:metal ion binding"/>
    <property type="evidence" value="ECO:0007669"/>
    <property type="project" value="UniProtKB-KW"/>
</dbReference>
<dbReference type="GO" id="GO:0004222">
    <property type="term" value="F:metalloendopeptidase activity"/>
    <property type="evidence" value="ECO:0007669"/>
    <property type="project" value="InterPro"/>
</dbReference>
<dbReference type="GO" id="GO:0006508">
    <property type="term" value="P:proteolysis"/>
    <property type="evidence" value="ECO:0007669"/>
    <property type="project" value="UniProtKB-KW"/>
</dbReference>
<dbReference type="CDD" id="cd11008">
    <property type="entry name" value="M35_deuterolysin_like"/>
    <property type="match status" value="1"/>
</dbReference>
<dbReference type="Gene3D" id="2.60.40.2970">
    <property type="match status" value="1"/>
</dbReference>
<dbReference type="Gene3D" id="3.40.390.10">
    <property type="entry name" value="Collagenase (Catalytic Domain)"/>
    <property type="match status" value="1"/>
</dbReference>
<dbReference type="InterPro" id="IPR050414">
    <property type="entry name" value="Fungal_M35_metalloproteases"/>
</dbReference>
<dbReference type="InterPro" id="IPR024079">
    <property type="entry name" value="MetalloPept_cat_dom_sf"/>
</dbReference>
<dbReference type="InterPro" id="IPR001384">
    <property type="entry name" value="Peptidase_M35"/>
</dbReference>
<dbReference type="PANTHER" id="PTHR37016">
    <property type="match status" value="1"/>
</dbReference>
<dbReference type="PANTHER" id="PTHR37016:SF3">
    <property type="entry name" value="NEUTRAL PROTEASE 2-RELATED"/>
    <property type="match status" value="1"/>
</dbReference>
<dbReference type="Pfam" id="PF02102">
    <property type="entry name" value="Peptidase_M35"/>
    <property type="match status" value="1"/>
</dbReference>
<dbReference type="PRINTS" id="PR00768">
    <property type="entry name" value="DEUTEROLYSIN"/>
</dbReference>
<dbReference type="SUPFAM" id="SSF55486">
    <property type="entry name" value="Metalloproteases ('zincins'), catalytic domain"/>
    <property type="match status" value="1"/>
</dbReference>
<dbReference type="PROSITE" id="PS00142">
    <property type="entry name" value="ZINC_PROTEASE"/>
    <property type="match status" value="1"/>
</dbReference>
<evidence type="ECO:0000250" key="1"/>
<evidence type="ECO:0000255" key="2"/>
<evidence type="ECO:0000255" key="3">
    <source>
        <dbReference type="PROSITE-ProRule" id="PRU10095"/>
    </source>
</evidence>
<evidence type="ECO:0000305" key="4"/>
<reference key="1">
    <citation type="journal article" date="2012" name="MBio">
        <title>Comparative genome analysis of Trichophyton rubrum and related dermatophytes reveals candidate genes involved in infection.</title>
        <authorList>
            <person name="Martinez D.A."/>
            <person name="Oliver B.G."/>
            <person name="Graeser Y."/>
            <person name="Goldberg J.M."/>
            <person name="Li W."/>
            <person name="Martinez-Rossi N.M."/>
            <person name="Monod M."/>
            <person name="Shelest E."/>
            <person name="Barton R.C."/>
            <person name="Birch E."/>
            <person name="Brakhage A.A."/>
            <person name="Chen Z."/>
            <person name="Gurr S.J."/>
            <person name="Heiman D."/>
            <person name="Heitman J."/>
            <person name="Kosti I."/>
            <person name="Rossi A."/>
            <person name="Saif S."/>
            <person name="Samalova M."/>
            <person name="Saunders C.W."/>
            <person name="Shea T."/>
            <person name="Summerbell R.C."/>
            <person name="Xu J."/>
            <person name="Young S."/>
            <person name="Zeng Q."/>
            <person name="Birren B.W."/>
            <person name="Cuomo C.A."/>
            <person name="White T.C."/>
        </authorList>
    </citation>
    <scope>NUCLEOTIDE SEQUENCE [LARGE SCALE GENOMIC DNA]</scope>
    <source>
        <strain>ATCC MYA-4605 / CBS 113480</strain>
    </source>
</reference>
<sequence length="367" mass="39737">MQVLVALAALSSLAAPVVGFSIPRGVPVSQSMIDVKLSSAGNSMVKATITNNGDRALNLLKFHTIMDSNPTRKVSIESQDGKEVQFTGMMPRYKNTDLKPTYFMSLPPKGTVEHSFDIAATHDLSRGGQFTLKAEGMVPIAEENSTNITGAAQYHSNELHMTIDGDQAASVKSAIGVAKRDGPFTRIDKRTKIDMQSCGNRQELQALTAALSASAKLSSMSAQAVGQNQQKYMEYFKDPKYAKTVQSRFQAVAKESSSTNNGGTTYFCSDVMGGCEEGVLAYTLPSRNQVYNCPIYYSELPPLTKECHAQDQATTTLHELTHNPAVQEPFCEDNGYGYERATALSAEKAVQNADSYALFANAVYVGC</sequence>
<protein>
    <recommendedName>
        <fullName>Probable neutral protease 2 homolog MCYG_00239</fullName>
        <ecNumber>3.4.24.39</ecNumber>
    </recommendedName>
    <alternativeName>
        <fullName>Deuterolysin MCYG_00239</fullName>
    </alternativeName>
</protein>
<keyword id="KW-0165">Cleavage on pair of basic residues</keyword>
<keyword id="KW-1015">Disulfide bond</keyword>
<keyword id="KW-0378">Hydrolase</keyword>
<keyword id="KW-0479">Metal-binding</keyword>
<keyword id="KW-0482">Metalloprotease</keyword>
<keyword id="KW-0645">Protease</keyword>
<keyword id="KW-1185">Reference proteome</keyword>
<keyword id="KW-0964">Secreted</keyword>
<keyword id="KW-0732">Signal</keyword>
<keyword id="KW-0843">Virulence</keyword>
<keyword id="KW-0862">Zinc</keyword>
<keyword id="KW-0865">Zymogen</keyword>
<name>NPIIB_ARTOC</name>